<sequence>MKNVFKALTVLLTLFSLTGCGLKGPLYFPPADKNAPPPTKPVETQTQSTVPDKNDRATGDGPSQVNY</sequence>
<protein>
    <recommendedName>
        <fullName evidence="1">LPS-assembly lipoprotein LptM</fullName>
    </recommendedName>
</protein>
<keyword id="KW-0998">Cell outer membrane</keyword>
<keyword id="KW-0449">Lipoprotein</keyword>
<keyword id="KW-0472">Membrane</keyword>
<keyword id="KW-0564">Palmitate</keyword>
<keyword id="KW-1185">Reference proteome</keyword>
<keyword id="KW-0732">Signal</keyword>
<dbReference type="EMBL" id="AE005674">
    <property type="protein sequence ID" value="AAN45322.1"/>
    <property type="molecule type" value="Genomic_DNA"/>
</dbReference>
<dbReference type="EMBL" id="AE014073">
    <property type="protein sequence ID" value="AAP18878.1"/>
    <property type="molecule type" value="Genomic_DNA"/>
</dbReference>
<dbReference type="RefSeq" id="NP_709615.1">
    <property type="nucleotide sequence ID" value="NC_004337.2"/>
</dbReference>
<dbReference type="RefSeq" id="WP_000799889.1">
    <property type="nucleotide sequence ID" value="NZ_WPGW01000139.1"/>
</dbReference>
<dbReference type="SMR" id="P0ADN9"/>
<dbReference type="STRING" id="198214.SF3886"/>
<dbReference type="PaxDb" id="198214-SF3886"/>
<dbReference type="GeneID" id="1025975"/>
<dbReference type="KEGG" id="sfl:SF3886"/>
<dbReference type="KEGG" id="sfx:S3870"/>
<dbReference type="PATRIC" id="fig|198214.7.peg.4583"/>
<dbReference type="HOGENOM" id="CLU_200497_0_0_6"/>
<dbReference type="Proteomes" id="UP000001006">
    <property type="component" value="Chromosome"/>
</dbReference>
<dbReference type="Proteomes" id="UP000002673">
    <property type="component" value="Chromosome"/>
</dbReference>
<dbReference type="GO" id="GO:0009279">
    <property type="term" value="C:cell outer membrane"/>
    <property type="evidence" value="ECO:0007669"/>
    <property type="project" value="UniProtKB-SubCell"/>
</dbReference>
<dbReference type="InterPro" id="IPR032831">
    <property type="entry name" value="LptM_cons"/>
</dbReference>
<dbReference type="NCBIfam" id="NF047847">
    <property type="entry name" value="SS_mature_LptM"/>
    <property type="match status" value="1"/>
</dbReference>
<dbReference type="Pfam" id="PF13627">
    <property type="entry name" value="LptM_cons"/>
    <property type="match status" value="1"/>
</dbReference>
<dbReference type="PROSITE" id="PS51257">
    <property type="entry name" value="PROKAR_LIPOPROTEIN"/>
    <property type="match status" value="1"/>
</dbReference>
<feature type="signal peptide" evidence="2">
    <location>
        <begin position="1"/>
        <end position="19"/>
    </location>
</feature>
<feature type="chain" id="PRO_0000043226" description="LPS-assembly lipoprotein LptM">
    <location>
        <begin position="20"/>
        <end position="67"/>
    </location>
</feature>
<feature type="region of interest" description="Disordered" evidence="3">
    <location>
        <begin position="26"/>
        <end position="67"/>
    </location>
</feature>
<feature type="compositionally biased region" description="Polar residues" evidence="3">
    <location>
        <begin position="42"/>
        <end position="51"/>
    </location>
</feature>
<feature type="lipid moiety-binding region" description="N-palmitoyl cysteine" evidence="2">
    <location>
        <position position="20"/>
    </location>
</feature>
<feature type="lipid moiety-binding region" description="S-diacylglycerol cysteine" evidence="2">
    <location>
        <position position="20"/>
    </location>
</feature>
<reference key="1">
    <citation type="journal article" date="2002" name="Nucleic Acids Res.">
        <title>Genome sequence of Shigella flexneri 2a: insights into pathogenicity through comparison with genomes of Escherichia coli K12 and O157.</title>
        <authorList>
            <person name="Jin Q."/>
            <person name="Yuan Z."/>
            <person name="Xu J."/>
            <person name="Wang Y."/>
            <person name="Shen Y."/>
            <person name="Lu W."/>
            <person name="Wang J."/>
            <person name="Liu H."/>
            <person name="Yang J."/>
            <person name="Yang F."/>
            <person name="Zhang X."/>
            <person name="Zhang J."/>
            <person name="Yang G."/>
            <person name="Wu H."/>
            <person name="Qu D."/>
            <person name="Dong J."/>
            <person name="Sun L."/>
            <person name="Xue Y."/>
            <person name="Zhao A."/>
            <person name="Gao Y."/>
            <person name="Zhu J."/>
            <person name="Kan B."/>
            <person name="Ding K."/>
            <person name="Chen S."/>
            <person name="Cheng H."/>
            <person name="Yao Z."/>
            <person name="He B."/>
            <person name="Chen R."/>
            <person name="Ma D."/>
            <person name="Qiang B."/>
            <person name="Wen Y."/>
            <person name="Hou Y."/>
            <person name="Yu J."/>
        </authorList>
    </citation>
    <scope>NUCLEOTIDE SEQUENCE [LARGE SCALE GENOMIC DNA]</scope>
    <source>
        <strain>301 / Serotype 2a</strain>
    </source>
</reference>
<reference key="2">
    <citation type="journal article" date="2003" name="Infect. Immun.">
        <title>Complete genome sequence and comparative genomics of Shigella flexneri serotype 2a strain 2457T.</title>
        <authorList>
            <person name="Wei J."/>
            <person name="Goldberg M.B."/>
            <person name="Burland V."/>
            <person name="Venkatesan M.M."/>
            <person name="Deng W."/>
            <person name="Fournier G."/>
            <person name="Mayhew G.F."/>
            <person name="Plunkett G. III"/>
            <person name="Rose D.J."/>
            <person name="Darling A."/>
            <person name="Mau B."/>
            <person name="Perna N.T."/>
            <person name="Payne S.M."/>
            <person name="Runyen-Janecky L.J."/>
            <person name="Zhou S."/>
            <person name="Schwartz D.C."/>
            <person name="Blattner F.R."/>
        </authorList>
    </citation>
    <scope>NUCLEOTIDE SEQUENCE [LARGE SCALE GENOMIC DNA]</scope>
    <source>
        <strain>ATCC 700930 / 2457T / Serotype 2a</strain>
    </source>
</reference>
<name>LPTM_SHIFL</name>
<comment type="function">
    <text evidence="1">Component of the lipopolysaccharide (LPS) transport (Lpt) pathway that promotes efficient assembly of the outer membrane LPS translocon (LptDE) by the BAM complex (By similarity). Facilitates oxidative maturation of LptD by stabilizing a conformation of the LPS translocon in which LptD can efficiently acquire native disulfide bonds, thereby activating the LPS translocon (By similarity).</text>
</comment>
<comment type="subunit">
    <text evidence="1">Interacts with the outer membrane embedded portion of the LPS translocon formed by LptD and LptE (LptDE).</text>
</comment>
<comment type="subcellular location">
    <subcellularLocation>
        <location evidence="1">Cell outer membrane</location>
        <topology evidence="2">Lipid-anchor</topology>
    </subcellularLocation>
</comment>
<comment type="similarity">
    <text evidence="4">Belongs to the LptM family.</text>
</comment>
<proteinExistence type="inferred from homology"/>
<organism>
    <name type="scientific">Shigella flexneri</name>
    <dbReference type="NCBI Taxonomy" id="623"/>
    <lineage>
        <taxon>Bacteria</taxon>
        <taxon>Pseudomonadati</taxon>
        <taxon>Pseudomonadota</taxon>
        <taxon>Gammaproteobacteria</taxon>
        <taxon>Enterobacterales</taxon>
        <taxon>Enterobacteriaceae</taxon>
        <taxon>Shigella</taxon>
    </lineage>
</organism>
<evidence type="ECO:0000250" key="1">
    <source>
        <dbReference type="UniProtKB" id="P0ADN6"/>
    </source>
</evidence>
<evidence type="ECO:0000255" key="2">
    <source>
        <dbReference type="PROSITE-ProRule" id="PRU00303"/>
    </source>
</evidence>
<evidence type="ECO:0000256" key="3">
    <source>
        <dbReference type="SAM" id="MobiDB-lite"/>
    </source>
</evidence>
<evidence type="ECO:0000305" key="4"/>
<accession>P0ADN9</accession>
<accession>P39166</accession>
<accession>Q8X3Y5</accession>
<gene>
    <name evidence="1" type="primary">lptM</name>
    <name type="synonym">yifL</name>
    <name type="ordered locus">SF3886</name>
    <name type="ordered locus">S3870</name>
</gene>